<comment type="similarity">
    <text evidence="1">Belongs to the bacterial ribosomal protein bL28 family.</text>
</comment>
<protein>
    <recommendedName>
        <fullName evidence="1">Large ribosomal subunit protein bL28</fullName>
    </recommendedName>
    <alternativeName>
        <fullName evidence="3">50S ribosomal protein L28</fullName>
    </alternativeName>
</protein>
<name>RL28_HAHCH</name>
<keyword id="KW-1185">Reference proteome</keyword>
<keyword id="KW-0687">Ribonucleoprotein</keyword>
<keyword id="KW-0689">Ribosomal protein</keyword>
<feature type="chain" id="PRO_1000007250" description="Large ribosomal subunit protein bL28">
    <location>
        <begin position="1"/>
        <end position="78"/>
    </location>
</feature>
<feature type="region of interest" description="Disordered" evidence="2">
    <location>
        <begin position="1"/>
        <end position="21"/>
    </location>
</feature>
<feature type="compositionally biased region" description="Polar residues" evidence="2">
    <location>
        <begin position="8"/>
        <end position="21"/>
    </location>
</feature>
<accession>Q2SN70</accession>
<proteinExistence type="inferred from homology"/>
<sequence length="78" mass="8919">MSRVCQVTGKSPITGNNVSHANNKTKRRFLPNLQTHRFWVENEKRFVKLRVSTKGMRIIDKVGIDKVLSDIRARGGKV</sequence>
<reference key="1">
    <citation type="journal article" date="2005" name="Nucleic Acids Res.">
        <title>Genomic blueprint of Hahella chejuensis, a marine microbe producing an algicidal agent.</title>
        <authorList>
            <person name="Jeong H."/>
            <person name="Yim J.H."/>
            <person name="Lee C."/>
            <person name="Choi S.-H."/>
            <person name="Park Y.K."/>
            <person name="Yoon S.H."/>
            <person name="Hur C.-G."/>
            <person name="Kang H.-Y."/>
            <person name="Kim D."/>
            <person name="Lee H.H."/>
            <person name="Park K.H."/>
            <person name="Park S.-H."/>
            <person name="Park H.-S."/>
            <person name="Lee H.K."/>
            <person name="Oh T.K."/>
            <person name="Kim J.F."/>
        </authorList>
    </citation>
    <scope>NUCLEOTIDE SEQUENCE [LARGE SCALE GENOMIC DNA]</scope>
    <source>
        <strain>KCTC 2396</strain>
    </source>
</reference>
<gene>
    <name evidence="1" type="primary">rpmB</name>
    <name type="ordered locus">HCH_01019</name>
</gene>
<evidence type="ECO:0000255" key="1">
    <source>
        <dbReference type="HAMAP-Rule" id="MF_00373"/>
    </source>
</evidence>
<evidence type="ECO:0000256" key="2">
    <source>
        <dbReference type="SAM" id="MobiDB-lite"/>
    </source>
</evidence>
<evidence type="ECO:0000305" key="3"/>
<dbReference type="EMBL" id="CP000155">
    <property type="protein sequence ID" value="ABC27904.1"/>
    <property type="molecule type" value="Genomic_DNA"/>
</dbReference>
<dbReference type="RefSeq" id="WP_011394979.1">
    <property type="nucleotide sequence ID" value="NC_007645.1"/>
</dbReference>
<dbReference type="SMR" id="Q2SN70"/>
<dbReference type="STRING" id="349521.HCH_01019"/>
<dbReference type="KEGG" id="hch:HCH_01019"/>
<dbReference type="eggNOG" id="COG0227">
    <property type="taxonomic scope" value="Bacteria"/>
</dbReference>
<dbReference type="HOGENOM" id="CLU_064548_3_1_6"/>
<dbReference type="OrthoDB" id="9805609at2"/>
<dbReference type="Proteomes" id="UP000000238">
    <property type="component" value="Chromosome"/>
</dbReference>
<dbReference type="GO" id="GO:0022625">
    <property type="term" value="C:cytosolic large ribosomal subunit"/>
    <property type="evidence" value="ECO:0007669"/>
    <property type="project" value="TreeGrafter"/>
</dbReference>
<dbReference type="GO" id="GO:0003735">
    <property type="term" value="F:structural constituent of ribosome"/>
    <property type="evidence" value="ECO:0007669"/>
    <property type="project" value="InterPro"/>
</dbReference>
<dbReference type="GO" id="GO:0006412">
    <property type="term" value="P:translation"/>
    <property type="evidence" value="ECO:0007669"/>
    <property type="project" value="UniProtKB-UniRule"/>
</dbReference>
<dbReference type="FunFam" id="2.30.170.40:FF:000001">
    <property type="entry name" value="50S ribosomal protein L28"/>
    <property type="match status" value="1"/>
</dbReference>
<dbReference type="Gene3D" id="2.30.170.40">
    <property type="entry name" value="Ribosomal protein L28/L24"/>
    <property type="match status" value="1"/>
</dbReference>
<dbReference type="HAMAP" id="MF_00373">
    <property type="entry name" value="Ribosomal_bL28"/>
    <property type="match status" value="1"/>
</dbReference>
<dbReference type="InterPro" id="IPR026569">
    <property type="entry name" value="Ribosomal_bL28"/>
</dbReference>
<dbReference type="InterPro" id="IPR034704">
    <property type="entry name" value="Ribosomal_bL28/bL31-like_sf"/>
</dbReference>
<dbReference type="InterPro" id="IPR001383">
    <property type="entry name" value="Ribosomal_bL28_bact-type"/>
</dbReference>
<dbReference type="InterPro" id="IPR037147">
    <property type="entry name" value="Ribosomal_bL28_sf"/>
</dbReference>
<dbReference type="NCBIfam" id="TIGR00009">
    <property type="entry name" value="L28"/>
    <property type="match status" value="1"/>
</dbReference>
<dbReference type="PANTHER" id="PTHR13528">
    <property type="entry name" value="39S RIBOSOMAL PROTEIN L28, MITOCHONDRIAL"/>
    <property type="match status" value="1"/>
</dbReference>
<dbReference type="PANTHER" id="PTHR13528:SF2">
    <property type="entry name" value="LARGE RIBOSOMAL SUBUNIT PROTEIN BL28M"/>
    <property type="match status" value="1"/>
</dbReference>
<dbReference type="Pfam" id="PF00830">
    <property type="entry name" value="Ribosomal_L28"/>
    <property type="match status" value="1"/>
</dbReference>
<dbReference type="SUPFAM" id="SSF143800">
    <property type="entry name" value="L28p-like"/>
    <property type="match status" value="1"/>
</dbReference>
<organism>
    <name type="scientific">Hahella chejuensis (strain KCTC 2396)</name>
    <dbReference type="NCBI Taxonomy" id="349521"/>
    <lineage>
        <taxon>Bacteria</taxon>
        <taxon>Pseudomonadati</taxon>
        <taxon>Pseudomonadota</taxon>
        <taxon>Gammaproteobacteria</taxon>
        <taxon>Oceanospirillales</taxon>
        <taxon>Hahellaceae</taxon>
        <taxon>Hahella</taxon>
    </lineage>
</organism>